<dbReference type="EC" id="5.3.1.17" evidence="1"/>
<dbReference type="EMBL" id="CP000266">
    <property type="protein sequence ID" value="ABF04994.1"/>
    <property type="molecule type" value="Genomic_DNA"/>
</dbReference>
<dbReference type="RefSeq" id="WP_000383213.1">
    <property type="nucleotide sequence ID" value="NC_008258.1"/>
</dbReference>
<dbReference type="SMR" id="Q0T121"/>
<dbReference type="KEGG" id="sfv:SFV_2921"/>
<dbReference type="HOGENOM" id="CLU_062609_0_0_6"/>
<dbReference type="UniPathway" id="UPA00545">
    <property type="reaction ID" value="UER00826"/>
</dbReference>
<dbReference type="Proteomes" id="UP000000659">
    <property type="component" value="Chromosome"/>
</dbReference>
<dbReference type="GO" id="GO:0008697">
    <property type="term" value="F:4-deoxy-L-threo-5-hexosulose-uronate ketol-isomerase activity"/>
    <property type="evidence" value="ECO:0007669"/>
    <property type="project" value="UniProtKB-UniRule"/>
</dbReference>
<dbReference type="GO" id="GO:0008270">
    <property type="term" value="F:zinc ion binding"/>
    <property type="evidence" value="ECO:0007669"/>
    <property type="project" value="UniProtKB-UniRule"/>
</dbReference>
<dbReference type="GO" id="GO:0019698">
    <property type="term" value="P:D-galacturonate catabolic process"/>
    <property type="evidence" value="ECO:0007669"/>
    <property type="project" value="TreeGrafter"/>
</dbReference>
<dbReference type="GO" id="GO:0042840">
    <property type="term" value="P:D-glucuronate catabolic process"/>
    <property type="evidence" value="ECO:0007669"/>
    <property type="project" value="TreeGrafter"/>
</dbReference>
<dbReference type="GO" id="GO:0045490">
    <property type="term" value="P:pectin catabolic process"/>
    <property type="evidence" value="ECO:0007669"/>
    <property type="project" value="UniProtKB-UniRule"/>
</dbReference>
<dbReference type="CDD" id="cd20491">
    <property type="entry name" value="cupin_KduI_C"/>
    <property type="match status" value="1"/>
</dbReference>
<dbReference type="CDD" id="cd20294">
    <property type="entry name" value="cupin_KduI_N"/>
    <property type="match status" value="1"/>
</dbReference>
<dbReference type="FunFam" id="2.60.120.10:FF:000018">
    <property type="entry name" value="4-deoxy-L-threo-5-hexosulose-uronate ketol-isomerase"/>
    <property type="match status" value="1"/>
</dbReference>
<dbReference type="FunFam" id="2.60.120.520:FF:000001">
    <property type="entry name" value="4-deoxy-L-threo-5-hexosulose-uronate ketol-isomerase"/>
    <property type="match status" value="1"/>
</dbReference>
<dbReference type="Gene3D" id="2.60.120.10">
    <property type="entry name" value="Jelly Rolls"/>
    <property type="match status" value="1"/>
</dbReference>
<dbReference type="Gene3D" id="2.60.120.520">
    <property type="entry name" value="pectin degrading enzyme 5-keto 4- deoxyuronate isomerase, domain 1"/>
    <property type="match status" value="1"/>
</dbReference>
<dbReference type="HAMAP" id="MF_00687">
    <property type="entry name" value="KduI"/>
    <property type="match status" value="1"/>
</dbReference>
<dbReference type="InterPro" id="IPR007045">
    <property type="entry name" value="KduI"/>
</dbReference>
<dbReference type="InterPro" id="IPR021120">
    <property type="entry name" value="KduI/IolB_isomerase"/>
</dbReference>
<dbReference type="InterPro" id="IPR027449">
    <property type="entry name" value="KduI_N"/>
</dbReference>
<dbReference type="InterPro" id="IPR014710">
    <property type="entry name" value="RmlC-like_jellyroll"/>
</dbReference>
<dbReference type="InterPro" id="IPR011051">
    <property type="entry name" value="RmlC_Cupin_sf"/>
</dbReference>
<dbReference type="NCBIfam" id="NF002091">
    <property type="entry name" value="PRK00924.1"/>
    <property type="match status" value="1"/>
</dbReference>
<dbReference type="PANTHER" id="PTHR38461">
    <property type="entry name" value="4-DEOXY-L-THREO-5-HEXOSULOSE-URONATE KETOL-ISOMERASE"/>
    <property type="match status" value="1"/>
</dbReference>
<dbReference type="PANTHER" id="PTHR38461:SF1">
    <property type="entry name" value="4-DEOXY-L-THREO-5-HEXOSULOSE-URONATE KETOL-ISOMERASE"/>
    <property type="match status" value="1"/>
</dbReference>
<dbReference type="Pfam" id="PF04962">
    <property type="entry name" value="KduI"/>
    <property type="match status" value="1"/>
</dbReference>
<dbReference type="PIRSF" id="PIRSF006625">
    <property type="entry name" value="KduI"/>
    <property type="match status" value="1"/>
</dbReference>
<dbReference type="SUPFAM" id="SSF51182">
    <property type="entry name" value="RmlC-like cupins"/>
    <property type="match status" value="1"/>
</dbReference>
<keyword id="KW-0413">Isomerase</keyword>
<keyword id="KW-0479">Metal-binding</keyword>
<keyword id="KW-0862">Zinc</keyword>
<accession>Q0T121</accession>
<gene>
    <name evidence="1" type="primary">kduI</name>
    <name type="ordered locus">SFV_2921</name>
</gene>
<organism>
    <name type="scientific">Shigella flexneri serotype 5b (strain 8401)</name>
    <dbReference type="NCBI Taxonomy" id="373384"/>
    <lineage>
        <taxon>Bacteria</taxon>
        <taxon>Pseudomonadati</taxon>
        <taxon>Pseudomonadota</taxon>
        <taxon>Gammaproteobacteria</taxon>
        <taxon>Enterobacterales</taxon>
        <taxon>Enterobacteriaceae</taxon>
        <taxon>Shigella</taxon>
    </lineage>
</organism>
<sequence length="278" mass="31059">MDVRQSIHGAHAKTLDTQGLRNEFLVEKVFVADEYTMVYSHIDRIIVGGIMPITKTVSVGGEVGKQLGVSYFLERRELGVINIGGAGTITVDGQCYEIGHRDALYVGKGAKEVVFASIDTATPAKFYYNCAPAHTTYPTKKVTPDEVSPVTLGDNLTSNRRTINKYFVPDVLETCQLSMGLTELAPGNLWNTMPCHTHERRMEVYFYFNMDDDACVFHMMGQPQETRHIVMHNEQAVISPSWSIHSGVGTKAYTFIWGMVGENQVFNDMDHVAVKDLR</sequence>
<evidence type="ECO:0000255" key="1">
    <source>
        <dbReference type="HAMAP-Rule" id="MF_00687"/>
    </source>
</evidence>
<protein>
    <recommendedName>
        <fullName evidence="1">4-deoxy-L-threo-5-hexosulose-uronate ketol-isomerase</fullName>
        <ecNumber evidence="1">5.3.1.17</ecNumber>
    </recommendedName>
    <alternativeName>
        <fullName evidence="1">5-keto-4-deoxyuronate isomerase</fullName>
    </alternativeName>
    <alternativeName>
        <fullName evidence="1">DKI isomerase</fullName>
    </alternativeName>
</protein>
<reference key="1">
    <citation type="journal article" date="2006" name="BMC Genomics">
        <title>Complete genome sequence of Shigella flexneri 5b and comparison with Shigella flexneri 2a.</title>
        <authorList>
            <person name="Nie H."/>
            <person name="Yang F."/>
            <person name="Zhang X."/>
            <person name="Yang J."/>
            <person name="Chen L."/>
            <person name="Wang J."/>
            <person name="Xiong Z."/>
            <person name="Peng J."/>
            <person name="Sun L."/>
            <person name="Dong J."/>
            <person name="Xue Y."/>
            <person name="Xu X."/>
            <person name="Chen S."/>
            <person name="Yao Z."/>
            <person name="Shen Y."/>
            <person name="Jin Q."/>
        </authorList>
    </citation>
    <scope>NUCLEOTIDE SEQUENCE [LARGE SCALE GENOMIC DNA]</scope>
    <source>
        <strain>8401</strain>
    </source>
</reference>
<comment type="function">
    <text evidence="1">Catalyzes the isomerization of 5-dehydro-4-deoxy-D-glucuronate to 3-deoxy-D-glycero-2,5-hexodiulosonate.</text>
</comment>
<comment type="catalytic activity">
    <reaction evidence="1">
        <text>5-dehydro-4-deoxy-D-glucuronate = 3-deoxy-D-glycero-2,5-hexodiulosonate</text>
        <dbReference type="Rhea" id="RHEA:23896"/>
        <dbReference type="ChEBI" id="CHEBI:17117"/>
        <dbReference type="ChEBI" id="CHEBI:29071"/>
        <dbReference type="EC" id="5.3.1.17"/>
    </reaction>
</comment>
<comment type="cofactor">
    <cofactor evidence="1">
        <name>Zn(2+)</name>
        <dbReference type="ChEBI" id="CHEBI:29105"/>
    </cofactor>
    <text evidence="1">Binds 1 zinc ion per subunit.</text>
</comment>
<comment type="pathway">
    <text evidence="1">Glycan metabolism; pectin degradation; 2-dehydro-3-deoxy-D-gluconate from pectin: step 4/5.</text>
</comment>
<comment type="similarity">
    <text evidence="1">Belongs to the KduI family.</text>
</comment>
<feature type="chain" id="PRO_1000045091" description="4-deoxy-L-threo-5-hexosulose-uronate ketol-isomerase">
    <location>
        <begin position="1"/>
        <end position="278"/>
    </location>
</feature>
<feature type="binding site" evidence="1">
    <location>
        <position position="196"/>
    </location>
    <ligand>
        <name>Zn(2+)</name>
        <dbReference type="ChEBI" id="CHEBI:29105"/>
    </ligand>
</feature>
<feature type="binding site" evidence="1">
    <location>
        <position position="198"/>
    </location>
    <ligand>
        <name>Zn(2+)</name>
        <dbReference type="ChEBI" id="CHEBI:29105"/>
    </ligand>
</feature>
<feature type="binding site" evidence="1">
    <location>
        <position position="203"/>
    </location>
    <ligand>
        <name>Zn(2+)</name>
        <dbReference type="ChEBI" id="CHEBI:29105"/>
    </ligand>
</feature>
<feature type="binding site" evidence="1">
    <location>
        <position position="245"/>
    </location>
    <ligand>
        <name>Zn(2+)</name>
        <dbReference type="ChEBI" id="CHEBI:29105"/>
    </ligand>
</feature>
<proteinExistence type="inferred from homology"/>
<name>KDUI_SHIF8</name>